<evidence type="ECO:0000255" key="1">
    <source>
        <dbReference type="PROSITE-ProRule" id="PRU00258"/>
    </source>
</evidence>
<evidence type="ECO:0000269" key="2">
    <source>
    </source>
</evidence>
<evidence type="ECO:0000269" key="3">
    <source>
    </source>
</evidence>
<evidence type="ECO:0000303" key="4">
    <source>
    </source>
</evidence>
<evidence type="ECO:0000305" key="5"/>
<evidence type="ECO:0007744" key="6">
    <source>
    </source>
</evidence>
<reference key="1">
    <citation type="journal article" date="1991" name="Gene">
        <title>Nucleotide sequence of the LYS2 gene of Saccharomyces cerevisiae: homology to Bacillus brevis tyrocidine synthetase 1.</title>
        <authorList>
            <person name="Morris M.E."/>
            <person name="Jinks-Robertson S."/>
        </authorList>
    </citation>
    <scope>NUCLEOTIDE SEQUENCE [GENOMIC DNA]</scope>
</reference>
<reference key="2">
    <citation type="journal article" date="1994" name="Yeast">
        <title>Analysis of a 70 kb region on the right arm of yeast chromosome II.</title>
        <authorList>
            <person name="Mannhaupt G."/>
            <person name="Stucka R."/>
            <person name="Ehnle S."/>
            <person name="Vetter I."/>
            <person name="Feldmann H."/>
        </authorList>
    </citation>
    <scope>NUCLEOTIDE SEQUENCE [GENOMIC DNA]</scope>
    <source>
        <strain>ATCC 204508 / S288c</strain>
    </source>
</reference>
<reference key="3">
    <citation type="journal article" date="1994" name="EMBO J.">
        <title>Complete DNA sequence of yeast chromosome II.</title>
        <authorList>
            <person name="Feldmann H."/>
            <person name="Aigle M."/>
            <person name="Aljinovic G."/>
            <person name="Andre B."/>
            <person name="Baclet M.C."/>
            <person name="Barthe C."/>
            <person name="Baur A."/>
            <person name="Becam A.-M."/>
            <person name="Biteau N."/>
            <person name="Boles E."/>
            <person name="Brandt T."/>
            <person name="Brendel M."/>
            <person name="Brueckner M."/>
            <person name="Bussereau F."/>
            <person name="Christiansen C."/>
            <person name="Contreras R."/>
            <person name="Crouzet M."/>
            <person name="Cziepluch C."/>
            <person name="Demolis N."/>
            <person name="Delaveau T."/>
            <person name="Doignon F."/>
            <person name="Domdey H."/>
            <person name="Duesterhus S."/>
            <person name="Dubois E."/>
            <person name="Dujon B."/>
            <person name="El Bakkoury M."/>
            <person name="Entian K.-D."/>
            <person name="Feuermann M."/>
            <person name="Fiers W."/>
            <person name="Fobo G.M."/>
            <person name="Fritz C."/>
            <person name="Gassenhuber J."/>
            <person name="Glansdorff N."/>
            <person name="Goffeau A."/>
            <person name="Grivell L.A."/>
            <person name="de Haan M."/>
            <person name="Hein C."/>
            <person name="Herbert C.J."/>
            <person name="Hollenberg C.P."/>
            <person name="Holmstroem K."/>
            <person name="Jacq C."/>
            <person name="Jacquet M."/>
            <person name="Jauniaux J.-C."/>
            <person name="Jonniaux J.-L."/>
            <person name="Kallesoee T."/>
            <person name="Kiesau P."/>
            <person name="Kirchrath L."/>
            <person name="Koetter P."/>
            <person name="Korol S."/>
            <person name="Liebl S."/>
            <person name="Logghe M."/>
            <person name="Lohan A.J.E."/>
            <person name="Louis E.J."/>
            <person name="Li Z.Y."/>
            <person name="Maat M.J."/>
            <person name="Mallet L."/>
            <person name="Mannhaupt G."/>
            <person name="Messenguy F."/>
            <person name="Miosga T."/>
            <person name="Molemans F."/>
            <person name="Mueller S."/>
            <person name="Nasr F."/>
            <person name="Obermaier B."/>
            <person name="Perea J."/>
            <person name="Pierard A."/>
            <person name="Piravandi E."/>
            <person name="Pohl F.M."/>
            <person name="Pohl T.M."/>
            <person name="Potier S."/>
            <person name="Proft M."/>
            <person name="Purnelle B."/>
            <person name="Ramezani Rad M."/>
            <person name="Rieger M."/>
            <person name="Rose M."/>
            <person name="Schaaff-Gerstenschlaeger I."/>
            <person name="Scherens B."/>
            <person name="Schwarzlose C."/>
            <person name="Skala J."/>
            <person name="Slonimski P.P."/>
            <person name="Smits P.H.M."/>
            <person name="Souciet J.-L."/>
            <person name="Steensma H.Y."/>
            <person name="Stucka R."/>
            <person name="Urrestarazu L.A."/>
            <person name="van der Aart Q.J.M."/>
            <person name="Van Dyck L."/>
            <person name="Vassarotti A."/>
            <person name="Vetter I."/>
            <person name="Vierendeels F."/>
            <person name="Vissers S."/>
            <person name="Wagner G."/>
            <person name="de Wergifosse P."/>
            <person name="Wolfe K.H."/>
            <person name="Zagulski M."/>
            <person name="Zimmermann F.K."/>
            <person name="Mewes H.-W."/>
            <person name="Kleine K."/>
        </authorList>
    </citation>
    <scope>NUCLEOTIDE SEQUENCE [LARGE SCALE GENOMIC DNA]</scope>
    <source>
        <strain>ATCC 204508 / S288c</strain>
    </source>
</reference>
<reference key="4">
    <citation type="journal article" date="2014" name="G3 (Bethesda)">
        <title>The reference genome sequence of Saccharomyces cerevisiae: Then and now.</title>
        <authorList>
            <person name="Engel S.R."/>
            <person name="Dietrich F.S."/>
            <person name="Fisk D.G."/>
            <person name="Binkley G."/>
            <person name="Balakrishnan R."/>
            <person name="Costanzo M.C."/>
            <person name="Dwight S.S."/>
            <person name="Hitz B.C."/>
            <person name="Karra K."/>
            <person name="Nash R.S."/>
            <person name="Weng S."/>
            <person name="Wong E.D."/>
            <person name="Lloyd P."/>
            <person name="Skrzypek M.S."/>
            <person name="Miyasato S.R."/>
            <person name="Simison M."/>
            <person name="Cherry J.M."/>
        </authorList>
    </citation>
    <scope>GENOME REANNOTATION</scope>
    <source>
        <strain>ATCC 204508 / S288c</strain>
    </source>
</reference>
<reference key="5">
    <citation type="journal article" date="1986" name="Gene">
        <title>Construction of LYS2 cartridges for use in genetic manipulations of Saccharomyces cerevisiae.</title>
        <authorList>
            <person name="Fleig U.N."/>
            <person name="Pridmore R.D."/>
            <person name="Philippsen P."/>
        </authorList>
    </citation>
    <scope>NUCLEOTIDE SEQUENCE [GENOMIC DNA] OF 1-150 AND 1209-1392</scope>
</reference>
<reference key="6">
    <citation type="journal article" date="1992" name="Yeast">
        <title>Molecular analysis of yeast chromosome II between CMD1 and LYS2: the excision repair gene RAD16 located in this region belongs to a novel group of double-finger proteins.</title>
        <authorList>
            <person name="Mannhaupt G."/>
            <person name="Stucka R."/>
            <person name="Ehnle S."/>
            <person name="Vetter I."/>
            <person name="Feldmann H."/>
        </authorList>
    </citation>
    <scope>NUCLEOTIDE SEQUENCE [GENOMIC DNA] OF 1083-1392</scope>
    <source>
        <strain>ATCC 204508 / S288c</strain>
    </source>
</reference>
<reference key="7">
    <citation type="journal article" date="1993" name="Eur. J. Biochem.">
        <title>TKL2, a second transketolase gene of Saccharomyces cerevisiae. Cloning, sequence and deletion analysis of the gene.</title>
        <authorList>
            <person name="Schaaff-Gerstenschlaeger I."/>
            <person name="Mannhaupt G."/>
            <person name="Vetter I."/>
            <person name="Zimmermann F.K."/>
            <person name="Feldmann H."/>
        </authorList>
    </citation>
    <scope>NUCLEOTIDE SEQUENCE [GENOMIC DNA] OF 1-130</scope>
    <source>
        <strain>ATCC 204508 / S288c</strain>
    </source>
</reference>
<reference key="8">
    <citation type="journal article" date="1999" name="Biochemistry">
        <title>Lysine biosynthesis in Saccharomyces cerevisiae: mechanism of alpha-aminoadipate reductase (Lys2) involves posttranslational phosphopantetheinylation by Lys5.</title>
        <authorList>
            <person name="Ehmann D.E."/>
            <person name="Gehring A.M."/>
            <person name="Walsh C.T."/>
        </authorList>
    </citation>
    <scope>FUNCTION</scope>
    <scope>CATALYTIC ACTIVITY</scope>
    <scope>PHOSPHOPANTETHEINYLATION AT SER-880</scope>
    <scope>IDENTIFICATION BY MASS SPECTROMETRY</scope>
    <scope>SUBSTRATE SPECIFICITY</scope>
    <scope>BIOPHYSICOCHEMICAL PROPERTIES</scope>
    <scope>REACTION MECHANISM</scope>
</reference>
<reference key="9">
    <citation type="journal article" date="2003" name="Nature">
        <title>Global analysis of protein expression in yeast.</title>
        <authorList>
            <person name="Ghaemmaghami S."/>
            <person name="Huh W.-K."/>
            <person name="Bower K."/>
            <person name="Howson R.W."/>
            <person name="Belle A."/>
            <person name="Dephoure N."/>
            <person name="O'Shea E.K."/>
            <person name="Weissman J.S."/>
        </authorList>
    </citation>
    <scope>LEVEL OF PROTEIN EXPRESSION [LARGE SCALE ANALYSIS]</scope>
</reference>
<reference key="10">
    <citation type="journal article" date="2012" name="Proteomics">
        <title>Sites of ubiquitin attachment in Saccharomyces cerevisiae.</title>
        <authorList>
            <person name="Starita L.M."/>
            <person name="Lo R.S."/>
            <person name="Eng J.K."/>
            <person name="von Haller P.D."/>
            <person name="Fields S."/>
        </authorList>
    </citation>
    <scope>UBIQUITINATION [LARGE SCALE ANALYSIS] AT LYS-541 AND LYS-1276</scope>
    <scope>IDENTIFICATION BY MASS SPECTROMETRY [LARGE SCALE ANALYSIS]</scope>
</reference>
<organism>
    <name type="scientific">Saccharomyces cerevisiae (strain ATCC 204508 / S288c)</name>
    <name type="common">Baker's yeast</name>
    <dbReference type="NCBI Taxonomy" id="559292"/>
    <lineage>
        <taxon>Eukaryota</taxon>
        <taxon>Fungi</taxon>
        <taxon>Dikarya</taxon>
        <taxon>Ascomycota</taxon>
        <taxon>Saccharomycotina</taxon>
        <taxon>Saccharomycetes</taxon>
        <taxon>Saccharomycetales</taxon>
        <taxon>Saccharomycetaceae</taxon>
        <taxon>Saccharomyces</taxon>
    </lineage>
</organism>
<name>LYS2_YEAST</name>
<feature type="chain" id="PRO_0000193153" description="L-2-aminoadipate reductase">
    <location>
        <begin position="1"/>
        <end position="1392"/>
    </location>
</feature>
<feature type="domain" description="Carrier" evidence="1">
    <location>
        <begin position="843"/>
        <end position="920"/>
    </location>
</feature>
<feature type="modified residue" description="O-(pantetheine 4'-phosphoryl)serine" evidence="1 2">
    <location>
        <position position="880"/>
    </location>
</feature>
<feature type="cross-link" description="Glycyl lysine isopeptide (Lys-Gly) (interchain with G-Cter in ubiquitin)" evidence="6">
    <location>
        <position position="541"/>
    </location>
</feature>
<feature type="cross-link" description="Glycyl lysine isopeptide (Lys-Gly) (interchain with G-Cter in ubiquitin)" evidence="6">
    <location>
        <position position="1276"/>
    </location>
</feature>
<keyword id="KW-0028">Amino-acid biosynthesis</keyword>
<keyword id="KW-1017">Isopeptide bond</keyword>
<keyword id="KW-0457">Lysine biosynthesis</keyword>
<keyword id="KW-0521">NADP</keyword>
<keyword id="KW-0560">Oxidoreductase</keyword>
<keyword id="KW-0596">Phosphopantetheine</keyword>
<keyword id="KW-0597">Phosphoprotein</keyword>
<keyword id="KW-1185">Reference proteome</keyword>
<keyword id="KW-0832">Ubl conjugation</keyword>
<gene>
    <name type="primary">LYS2</name>
    <name type="ordered locus">YBR115C</name>
    <name type="ORF">YBR0910</name>
</gene>
<sequence>MTNEKVWIEKLDNPTLSVLPHDFLRPQQEPYTKQATYSLQLPQLDVPHDSFSNKYAVALSVWAALIYRVTGDDDIVLYIANNKILRFNIQPTWSFNELYSTINNELNKLNSIEANFSFDELAEKIQSCQDLERTPQLFRLAFLENQDFKLDEFKHHLVDFALNLDTSNNAHVLNLIYNSLLYSNERVTIVADQFTQYLTAALSDPSNCITKISLITASSKDSLPDPTKNLGWCDFVGCIHDIFQDNAEAFPERTCVVETPTLNSDKSRSFTYRDINRTSNIVAHYLIKTGIKRGDVVMIYSSRGVDLMVCVMGVLKAGATFSVIDPAYPPARQTIYLGVAKPRGLIVIRAAGQLDQLVEDYINDELEIVSRINSIAIQENGTIEGGKLDNGEDVLAPYDHYKDTRTGVVVGPDSNPTLSFTSGSEGIPKGVLGRHFSLAYYFNWMSKRFNLTENDKFTMLSGIAHDPIQRDMFTPLFLGAQLYVPTQDDIGTPGRLAEWMSKYGCTVTHLTPAMGQLLTAQATTPFPKLHHAFFVGDILTKRDCLRLQTLAENCRIVNMYGTTETQRAVSYFEVKSKNDDPNFLKKLKDVMPAGKGMLNVQLLVVNRNDRTQICGIGEIGEIYVRAGGLAEGYRGLPELNKEKFVNNWFVEKDHWNYLDKDNGEPWRQFWLGPRDRLYRTGDLGRYLPNGDCECCGRADDQVKIRGFRIELGEIDTHISQHPLVRENITLVRKNADNEPTLITFMVPRFDKPDDLSKFQSDVPKEVETDPIVKGLIGYHLLSKDIRTFLKKRLASYAMPSLIVVMDKLPLNPNGKVDKPKLQFPTPKQLNLVAENTVSETDDSQFTNVEREVRDLWLSILPTKPASVSPDDSFFDLGGHSILATKMIFTLKKKLQVDLPLGTIFKYPTIKAFAAEIDRIKSSGGSSQGEVVENVTANYAEDAKKLVETLPSSYPSREYFVEPNSAEGKTTINVFVTGVTGFLGSYILADLLGRSPKNYSFKVFAHVRAKDEEAAFARLQKAGITYGTWNEKFASNIKVVLGDLSKSQFGLSDEKWMDLANTVDIIIHNGALVHWVYPYAKLRDPNVISTINVMSLAAVGKPKFFDFVSSTSTLDTEYYFNLSDKLVSEGKPGILESDDLMNSASGLTGGYGQSKWAAEYIIRRAGERGLRGCIVRPGYVTGASANGSSNTDDFLLRFLKGSVQLGKIPDIENSVNMVPVDHVARVVVATSLNPPKENELAVAQVTGHPRILFKDYLYTLHDYGYDVEIESYSKWKKSLEASVIDRNEENALYPLLHMVLDNLPESTKAPELDDRNAVASLKKDTAWTGVDWSNGIGVTPEEVGIYIAFLNKVGFLPPPTHNDKLPLPSIELTQAQISLVASGAGARGSSAAA</sequence>
<dbReference type="EC" id="1.2.1.31" evidence="2"/>
<dbReference type="EC" id="1.2.1.95" evidence="2"/>
<dbReference type="EMBL" id="M36287">
    <property type="protein sequence ID" value="AAA34747.1"/>
    <property type="molecule type" value="Genomic_DNA"/>
</dbReference>
<dbReference type="EMBL" id="X66247">
    <property type="protein sequence ID" value="CAA46975.1"/>
    <property type="molecule type" value="Genomic_DNA"/>
</dbReference>
<dbReference type="EMBL" id="X78993">
    <property type="protein sequence ID" value="CAA55617.1"/>
    <property type="molecule type" value="Genomic_DNA"/>
</dbReference>
<dbReference type="EMBL" id="Z35984">
    <property type="protein sequence ID" value="CAA85072.1"/>
    <property type="molecule type" value="Genomic_DNA"/>
</dbReference>
<dbReference type="EMBL" id="X73532">
    <property type="protein sequence ID" value="CAA51938.1"/>
    <property type="molecule type" value="Genomic_DNA"/>
</dbReference>
<dbReference type="EMBL" id="BK006936">
    <property type="protein sequence ID" value="DAA07234.1"/>
    <property type="molecule type" value="Genomic_DNA"/>
</dbReference>
<dbReference type="PIR" id="JU0448">
    <property type="entry name" value="YGBYAD"/>
</dbReference>
<dbReference type="RefSeq" id="NP_009673.1">
    <property type="nucleotide sequence ID" value="NM_001178463.1"/>
</dbReference>
<dbReference type="SMR" id="P07702"/>
<dbReference type="BioGRID" id="32818">
    <property type="interactions" value="34"/>
</dbReference>
<dbReference type="DIP" id="DIP-6811N"/>
<dbReference type="FunCoup" id="P07702">
    <property type="interactions" value="894"/>
</dbReference>
<dbReference type="IntAct" id="P07702">
    <property type="interactions" value="4"/>
</dbReference>
<dbReference type="MINT" id="P07702"/>
<dbReference type="STRING" id="4932.YBR115C"/>
<dbReference type="CarbonylDB" id="P07702"/>
<dbReference type="GlyGen" id="P07702">
    <property type="glycosylation" value="1 site"/>
</dbReference>
<dbReference type="iPTMnet" id="P07702"/>
<dbReference type="PaxDb" id="4932-YBR115C"/>
<dbReference type="PeptideAtlas" id="P07702"/>
<dbReference type="EnsemblFungi" id="YBR115C_mRNA">
    <property type="protein sequence ID" value="YBR115C"/>
    <property type="gene ID" value="YBR115C"/>
</dbReference>
<dbReference type="GeneID" id="852412"/>
<dbReference type="KEGG" id="sce:YBR115C"/>
<dbReference type="AGR" id="SGD:S000000319"/>
<dbReference type="SGD" id="S000000319">
    <property type="gene designation" value="LYS2"/>
</dbReference>
<dbReference type="VEuPathDB" id="FungiDB:YBR115C"/>
<dbReference type="eggNOG" id="KOG1178">
    <property type="taxonomic scope" value="Eukaryota"/>
</dbReference>
<dbReference type="HOGENOM" id="CLU_000022_19_0_1"/>
<dbReference type="InParanoid" id="P07702"/>
<dbReference type="OMA" id="ENDKFTM"/>
<dbReference type="OrthoDB" id="329835at2759"/>
<dbReference type="BioCyc" id="MetaCyc:YBR115C-MONOMER"/>
<dbReference type="BioCyc" id="YEAST:YBR115C-MONOMER"/>
<dbReference type="BRENDA" id="1.2.1.95">
    <property type="organism ID" value="984"/>
</dbReference>
<dbReference type="SABIO-RK" id="P07702"/>
<dbReference type="UniPathway" id="UPA00033">
    <property type="reaction ID" value="UER00032"/>
</dbReference>
<dbReference type="BioGRID-ORCS" id="852412">
    <property type="hits" value="5 hits in 10 CRISPR screens"/>
</dbReference>
<dbReference type="PRO" id="PR:P07702"/>
<dbReference type="Proteomes" id="UP000002311">
    <property type="component" value="Chromosome II"/>
</dbReference>
<dbReference type="RNAct" id="P07702">
    <property type="molecule type" value="protein"/>
</dbReference>
<dbReference type="GO" id="GO:0005737">
    <property type="term" value="C:cytoplasm"/>
    <property type="evidence" value="ECO:0000303"/>
    <property type="project" value="SGD"/>
</dbReference>
<dbReference type="GO" id="GO:0004043">
    <property type="term" value="F:L-aminoadipate-semialdehyde dehydrogenase activity"/>
    <property type="evidence" value="ECO:0000314"/>
    <property type="project" value="SGD"/>
</dbReference>
<dbReference type="GO" id="GO:0031177">
    <property type="term" value="F:phosphopantetheine binding"/>
    <property type="evidence" value="ECO:0007669"/>
    <property type="project" value="InterPro"/>
</dbReference>
<dbReference type="GO" id="GO:0019878">
    <property type="term" value="P:lysine biosynthetic process via aminoadipic acid"/>
    <property type="evidence" value="ECO:0000314"/>
    <property type="project" value="SGD"/>
</dbReference>
<dbReference type="CDD" id="cd17647">
    <property type="entry name" value="A_NRPS_alphaAR"/>
    <property type="match status" value="1"/>
</dbReference>
<dbReference type="CDD" id="cd05235">
    <property type="entry name" value="SDR_e1"/>
    <property type="match status" value="1"/>
</dbReference>
<dbReference type="FunFam" id="3.40.50.12780:FF:000046">
    <property type="entry name" value="L-2-aminoadipate reductase"/>
    <property type="match status" value="1"/>
</dbReference>
<dbReference type="FunFam" id="3.40.50.720:FF:000787">
    <property type="entry name" value="L-2-aminoadipate reductase"/>
    <property type="match status" value="1"/>
</dbReference>
<dbReference type="FunFam" id="3.30.300.30:FF:000035">
    <property type="entry name" value="L-2-aminoadipate reductase large subunit"/>
    <property type="match status" value="1"/>
</dbReference>
<dbReference type="FunFam" id="1.10.1200.10:FF:000020">
    <property type="entry name" value="Peptide synthetase mbtE"/>
    <property type="match status" value="1"/>
</dbReference>
<dbReference type="Gene3D" id="3.30.300.30">
    <property type="match status" value="1"/>
</dbReference>
<dbReference type="Gene3D" id="1.10.1200.10">
    <property type="entry name" value="ACP-like"/>
    <property type="match status" value="1"/>
</dbReference>
<dbReference type="Gene3D" id="3.40.50.12780">
    <property type="entry name" value="N-terminal domain of ligase-like"/>
    <property type="match status" value="1"/>
</dbReference>
<dbReference type="Gene3D" id="3.40.50.720">
    <property type="entry name" value="NAD(P)-binding Rossmann-like Domain"/>
    <property type="match status" value="1"/>
</dbReference>
<dbReference type="Gene3D" id="3.30.559.30">
    <property type="entry name" value="Nonribosomal peptide synthetase, condensation domain"/>
    <property type="match status" value="1"/>
</dbReference>
<dbReference type="InterPro" id="IPR010071">
    <property type="entry name" value="AA_adenyl_dom"/>
</dbReference>
<dbReference type="InterPro" id="IPR036736">
    <property type="entry name" value="ACP-like_sf"/>
</dbReference>
<dbReference type="InterPro" id="IPR045851">
    <property type="entry name" value="AMP-bd_C_sf"/>
</dbReference>
<dbReference type="InterPro" id="IPR020845">
    <property type="entry name" value="AMP-binding_CS"/>
</dbReference>
<dbReference type="InterPro" id="IPR000873">
    <property type="entry name" value="AMP-dep_synth/lig_dom"/>
</dbReference>
<dbReference type="InterPro" id="IPR042099">
    <property type="entry name" value="ANL_N_sf"/>
</dbReference>
<dbReference type="InterPro" id="IPR013120">
    <property type="entry name" value="Far_NAD-bd"/>
</dbReference>
<dbReference type="InterPro" id="IPR014397">
    <property type="entry name" value="Lys2"/>
</dbReference>
<dbReference type="InterPro" id="IPR036291">
    <property type="entry name" value="NAD(P)-bd_dom_sf"/>
</dbReference>
<dbReference type="InterPro" id="IPR020806">
    <property type="entry name" value="PKS_PP-bd"/>
</dbReference>
<dbReference type="InterPro" id="IPR009081">
    <property type="entry name" value="PP-bd_ACP"/>
</dbReference>
<dbReference type="InterPro" id="IPR006162">
    <property type="entry name" value="Ppantetheine_attach_site"/>
</dbReference>
<dbReference type="InterPro" id="IPR010080">
    <property type="entry name" value="Thioester_reductase-like_dom"/>
</dbReference>
<dbReference type="NCBIfam" id="TIGR01733">
    <property type="entry name" value="AA-adenyl-dom"/>
    <property type="match status" value="1"/>
</dbReference>
<dbReference type="NCBIfam" id="TIGR03443">
    <property type="entry name" value="alpha_am_amid"/>
    <property type="match status" value="1"/>
</dbReference>
<dbReference type="NCBIfam" id="TIGR01746">
    <property type="entry name" value="Thioester-redct"/>
    <property type="match status" value="1"/>
</dbReference>
<dbReference type="PANTHER" id="PTHR44845">
    <property type="entry name" value="CARRIER DOMAIN-CONTAINING PROTEIN"/>
    <property type="match status" value="1"/>
</dbReference>
<dbReference type="PANTHER" id="PTHR44845:SF1">
    <property type="entry name" value="L-2-AMINOADIPATE REDUCTASE"/>
    <property type="match status" value="1"/>
</dbReference>
<dbReference type="Pfam" id="PF00501">
    <property type="entry name" value="AMP-binding"/>
    <property type="match status" value="1"/>
</dbReference>
<dbReference type="Pfam" id="PF07993">
    <property type="entry name" value="NAD_binding_4"/>
    <property type="match status" value="1"/>
</dbReference>
<dbReference type="Pfam" id="PF00550">
    <property type="entry name" value="PP-binding"/>
    <property type="match status" value="1"/>
</dbReference>
<dbReference type="PIRSF" id="PIRSF001617">
    <property type="entry name" value="Alpha-AR"/>
    <property type="match status" value="1"/>
</dbReference>
<dbReference type="SMART" id="SM00823">
    <property type="entry name" value="PKS_PP"/>
    <property type="match status" value="1"/>
</dbReference>
<dbReference type="SMART" id="SM01294">
    <property type="entry name" value="PKS_PP_betabranch"/>
    <property type="match status" value="1"/>
</dbReference>
<dbReference type="SUPFAM" id="SSF56801">
    <property type="entry name" value="Acetyl-CoA synthetase-like"/>
    <property type="match status" value="1"/>
</dbReference>
<dbReference type="SUPFAM" id="SSF47336">
    <property type="entry name" value="ACP-like"/>
    <property type="match status" value="1"/>
</dbReference>
<dbReference type="SUPFAM" id="SSF52777">
    <property type="entry name" value="CoA-dependent acyltransferases"/>
    <property type="match status" value="1"/>
</dbReference>
<dbReference type="SUPFAM" id="SSF51735">
    <property type="entry name" value="NAD(P)-binding Rossmann-fold domains"/>
    <property type="match status" value="1"/>
</dbReference>
<dbReference type="PROSITE" id="PS00455">
    <property type="entry name" value="AMP_BINDING"/>
    <property type="match status" value="1"/>
</dbReference>
<dbReference type="PROSITE" id="PS50075">
    <property type="entry name" value="CARRIER"/>
    <property type="match status" value="1"/>
</dbReference>
<dbReference type="PROSITE" id="PS00012">
    <property type="entry name" value="PHOSPHOPANTETHEINE"/>
    <property type="match status" value="1"/>
</dbReference>
<protein>
    <recommendedName>
        <fullName>L-2-aminoadipate reductase</fullName>
        <ecNumber evidence="2">1.2.1.31</ecNumber>
        <ecNumber evidence="2">1.2.1.95</ecNumber>
    </recommendedName>
    <alternativeName>
        <fullName evidence="4">Alpha-aminoadipate reductase</fullName>
        <shortName>Alpha-AR</shortName>
    </alternativeName>
    <alternativeName>
        <fullName>L-aminoadipate-semialdehyde dehydrogenase</fullName>
    </alternativeName>
</protein>
<comment type="function">
    <text evidence="2">Catalyzes the activation of alpha-aminoadipate by ATP-dependent adenylation and the reduction of activated alpha-aminoadipate by NADPH. The activated alpha-aminoadipate is bound to the phosphopantheinyl group of the enzyme itself before it is reduced to (S)-2-amino-6-oxohexanoate.</text>
</comment>
<comment type="catalytic activity">
    <reaction evidence="2">
        <text>(S)-2-amino-6-oxohexanoate + NADP(+) + H2O = L-2-aminoadipate + NADPH + 2 H(+)</text>
        <dbReference type="Rhea" id="RHEA:12304"/>
        <dbReference type="ChEBI" id="CHEBI:15377"/>
        <dbReference type="ChEBI" id="CHEBI:15378"/>
        <dbReference type="ChEBI" id="CHEBI:57783"/>
        <dbReference type="ChEBI" id="CHEBI:58321"/>
        <dbReference type="ChEBI" id="CHEBI:58349"/>
        <dbReference type="ChEBI" id="CHEBI:58672"/>
        <dbReference type="EC" id="1.2.1.31"/>
    </reaction>
</comment>
<comment type="catalytic activity">
    <reaction evidence="2">
        <text>(S)-2-amino-6-oxohexanoate + NAD(+) + H2O = L-2-aminoadipate + NADH + 2 H(+)</text>
        <dbReference type="Rhea" id="RHEA:12308"/>
        <dbReference type="ChEBI" id="CHEBI:15377"/>
        <dbReference type="ChEBI" id="CHEBI:15378"/>
        <dbReference type="ChEBI" id="CHEBI:57540"/>
        <dbReference type="ChEBI" id="CHEBI:57945"/>
        <dbReference type="ChEBI" id="CHEBI:58321"/>
        <dbReference type="ChEBI" id="CHEBI:58672"/>
        <dbReference type="EC" id="1.2.1.31"/>
    </reaction>
</comment>
<comment type="catalytic activity">
    <reaction evidence="2">
        <text>(S)-2-amino-6-oxohexanoate + AMP + diphosphate + NADP(+) = L-2-aminoadipate + ATP + NADPH + H(+)</text>
        <dbReference type="Rhea" id="RHEA:46936"/>
        <dbReference type="ChEBI" id="CHEBI:15378"/>
        <dbReference type="ChEBI" id="CHEBI:30616"/>
        <dbReference type="ChEBI" id="CHEBI:33019"/>
        <dbReference type="ChEBI" id="CHEBI:57783"/>
        <dbReference type="ChEBI" id="CHEBI:58321"/>
        <dbReference type="ChEBI" id="CHEBI:58349"/>
        <dbReference type="ChEBI" id="CHEBI:58672"/>
        <dbReference type="ChEBI" id="CHEBI:456215"/>
        <dbReference type="EC" id="1.2.1.95"/>
    </reaction>
</comment>
<comment type="cofactor">
    <cofactor evidence="2">
        <name>pantetheine 4'-phosphate</name>
        <dbReference type="ChEBI" id="CHEBI:47942"/>
    </cofactor>
    <text evidence="2">Binds 1 phosphopantetheine covalently.</text>
</comment>
<comment type="biophysicochemical properties">
    <kinetics>
        <KM evidence="2">620 uM for NADPH</KM>
        <text evidence="2">kcat is 670 min(-1).</text>
    </kinetics>
</comment>
<comment type="pathway">
    <text>Amino-acid biosynthesis; L-lysine biosynthesis via AAA pathway; L-lysine from L-alpha-aminoadipate (fungal route): step 1/3.</text>
</comment>
<comment type="miscellaneous">
    <text evidence="3">Present with 7430 molecules/cell in log phase SD medium.</text>
</comment>
<comment type="similarity">
    <text evidence="5">Belongs to the ATP-dependent AMP-binding enzyme family.</text>
</comment>
<accession>P07702</accession>
<accession>D6VQB4</accession>
<proteinExistence type="evidence at protein level"/>